<accession>P13112</accession>
<sequence length="116" mass="12511">MSEPQNGRGALFTGGLAAILASACCLGPLVLIALGFSGAWIGNLTVLEPYRPIFIGAALVALFFAWRRIYRPAQACKPGDVCAIPQVRATYKLIFWVVAALVLVALGFPYVMPFFY</sequence>
<organism>
    <name type="scientific">Serratia marcescens</name>
    <dbReference type="NCBI Taxonomy" id="615"/>
    <lineage>
        <taxon>Bacteria</taxon>
        <taxon>Pseudomonadati</taxon>
        <taxon>Pseudomonadota</taxon>
        <taxon>Gammaproteobacteria</taxon>
        <taxon>Enterobacterales</taxon>
        <taxon>Yersiniaceae</taxon>
        <taxon>Serratia</taxon>
    </lineage>
</organism>
<dbReference type="EMBL" id="M24940">
    <property type="protein sequence ID" value="AAA98222.1"/>
    <property type="molecule type" value="Genomic_DNA"/>
</dbReference>
<dbReference type="RefSeq" id="WP_001294666.1">
    <property type="nucleotide sequence ID" value="NZ_SWIB01000042.1"/>
</dbReference>
<dbReference type="GO" id="GO:0005886">
    <property type="term" value="C:plasma membrane"/>
    <property type="evidence" value="ECO:0007669"/>
    <property type="project" value="UniProtKB-SubCell"/>
</dbReference>
<dbReference type="GO" id="GO:0015097">
    <property type="term" value="F:mercury ion transmembrane transporter activity"/>
    <property type="evidence" value="ECO:0007669"/>
    <property type="project" value="InterPro"/>
</dbReference>
<dbReference type="GO" id="GO:0046872">
    <property type="term" value="F:metal ion binding"/>
    <property type="evidence" value="ECO:0007669"/>
    <property type="project" value="UniProtKB-KW"/>
</dbReference>
<dbReference type="Gene3D" id="1.10.287.910">
    <property type="entry name" value="bacterial mercury transporter, merf"/>
    <property type="match status" value="1"/>
</dbReference>
<dbReference type="InterPro" id="IPR003457">
    <property type="entry name" value="Transprt_MerT"/>
</dbReference>
<dbReference type="NCBIfam" id="NF010314">
    <property type="entry name" value="PRK13751.2"/>
    <property type="match status" value="1"/>
</dbReference>
<dbReference type="Pfam" id="PF02411">
    <property type="entry name" value="MerT"/>
    <property type="match status" value="1"/>
</dbReference>
<name>MERT_SERMA</name>
<protein>
    <recommendedName>
        <fullName evidence="1">Mercuric transport protein MerT</fullName>
    </recommendedName>
    <alternativeName>
        <fullName evidence="1">Mercury ion transport protein</fullName>
    </alternativeName>
</protein>
<feature type="chain" id="PRO_0000096433" description="Mercuric transport protein MerT">
    <location>
        <begin position="1"/>
        <end position="116"/>
    </location>
</feature>
<feature type="transmembrane region" description="Helical" evidence="2">
    <location>
        <begin position="16"/>
        <end position="36"/>
    </location>
</feature>
<feature type="transmembrane region" description="Helical" evidence="2">
    <location>
        <begin position="46"/>
        <end position="66"/>
    </location>
</feature>
<feature type="transmembrane region" description="Helical" evidence="2">
    <location>
        <begin position="94"/>
        <end position="114"/>
    </location>
</feature>
<feature type="binding site" evidence="1">
    <location>
        <position position="24"/>
    </location>
    <ligand>
        <name>Hg(2+)</name>
        <dbReference type="ChEBI" id="CHEBI:16793"/>
    </ligand>
</feature>
<feature type="binding site" evidence="1">
    <location>
        <position position="25"/>
    </location>
    <ligand>
        <name>Hg(2+)</name>
        <dbReference type="ChEBI" id="CHEBI:16793"/>
    </ligand>
</feature>
<feature type="binding site" evidence="1">
    <location>
        <position position="76"/>
    </location>
    <ligand>
        <name>Hg(2+)</name>
        <dbReference type="ChEBI" id="CHEBI:16793"/>
    </ligand>
</feature>
<feature type="binding site" evidence="1">
    <location>
        <position position="82"/>
    </location>
    <ligand>
        <name>Hg(2+)</name>
        <dbReference type="ChEBI" id="CHEBI:16793"/>
    </ligand>
</feature>
<gene>
    <name evidence="3" type="primary">merT</name>
</gene>
<keyword id="KW-0997">Cell inner membrane</keyword>
<keyword id="KW-1003">Cell membrane</keyword>
<keyword id="KW-0472">Membrane</keyword>
<keyword id="KW-0475">Mercuric resistance</keyword>
<keyword id="KW-0476">Mercury</keyword>
<keyword id="KW-0479">Metal-binding</keyword>
<keyword id="KW-0614">Plasmid</keyword>
<keyword id="KW-0812">Transmembrane</keyword>
<keyword id="KW-1133">Transmembrane helix</keyword>
<keyword id="KW-0813">Transport</keyword>
<keyword id="KW-0814">Transposable element</keyword>
<proteinExistence type="inferred from homology"/>
<evidence type="ECO:0000250" key="1">
    <source>
        <dbReference type="UniProtKB" id="P04140"/>
    </source>
</evidence>
<evidence type="ECO:0000255" key="2"/>
<evidence type="ECO:0000303" key="3">
    <source>
    </source>
</evidence>
<evidence type="ECO:0000305" key="4"/>
<reference key="1">
    <citation type="journal article" date="1989" name="J. Bacteriol.">
        <title>Mercury operon regulation by the merR gene of the organomercurial resistance system of plasmid pDU1358.</title>
        <authorList>
            <person name="Nucifora G."/>
            <person name="Chu L."/>
            <person name="Silver S."/>
            <person name="Misra T.K."/>
        </authorList>
    </citation>
    <scope>NUCLEOTIDE SEQUENCE [GENOMIC DNA]</scope>
</reference>
<geneLocation type="plasmid">
    <name>pDU1358</name>
</geneLocation>
<comment type="function">
    <text evidence="1">Involved in mercury resistance. Probably transfers a mercuric ion from the periplasmic Hg(2+)-binding protein MerP to the cytoplasmic mercuric reductase MerA.</text>
</comment>
<comment type="subcellular location">
    <subcellularLocation>
        <location evidence="4">Cell inner membrane</location>
        <topology evidence="2">Multi-pass membrane protein</topology>
    </subcellularLocation>
</comment>
<comment type="similarity">
    <text evidence="4">Belongs to the MerT family.</text>
</comment>